<sequence length="209" mass="23809">MKDPNTIPPWRCTDFNAWCIAVDKSTNVKNKEELLSTLTYFINYEIEMGQTYPIDIKMTRNEAEDFFFKFCTVICVPVESETSPAPDLATASIDWKTSLLGAFYIKPNYPGRCSHICNGGFLVSPSHRSKGIGRNLANAYLYFAPRIGFKSSVFNLVFATNIKSIRLWERLNFTRAGIIKDAGRLKGHEGYVDAYIYQYHFPSLEDALK</sequence>
<accession>Q09927</accession>
<evidence type="ECO:0000250" key="1">
    <source>
        <dbReference type="UniProtKB" id="E9P8D2"/>
    </source>
</evidence>
<evidence type="ECO:0000255" key="2">
    <source>
        <dbReference type="PROSITE-ProRule" id="PRU00532"/>
    </source>
</evidence>
<evidence type="ECO:0000269" key="3">
    <source>
    </source>
</evidence>
<evidence type="ECO:0000269" key="4">
    <source>
    </source>
</evidence>
<evidence type="ECO:0000303" key="5">
    <source>
    </source>
</evidence>
<evidence type="ECO:0000305" key="6"/>
<evidence type="ECO:0000312" key="7">
    <source>
        <dbReference type="PomBase" id="SPAC21E11.04"/>
    </source>
</evidence>
<feature type="chain" id="PRO_0000074604" description="N-acetyltransferase aca1">
    <location>
        <begin position="1"/>
        <end position="209"/>
    </location>
</feature>
<feature type="domain" description="N-acetyltransferase" evidence="2">
    <location>
        <begin position="26"/>
        <end position="202"/>
    </location>
</feature>
<feature type="binding site" evidence="1">
    <location>
        <position position="118"/>
    </location>
    <ligand>
        <name>substrate</name>
    </ligand>
</feature>
<feature type="binding site" evidence="1">
    <location>
        <begin position="128"/>
        <end position="133"/>
    </location>
    <ligand>
        <name>CoA</name>
        <dbReference type="ChEBI" id="CHEBI:57287"/>
    </ligand>
</feature>
<feature type="binding site" evidence="1">
    <location>
        <begin position="155"/>
        <end position="156"/>
    </location>
    <ligand>
        <name>substrate</name>
    </ligand>
</feature>
<organism>
    <name type="scientific">Schizosaccharomyces pombe (strain 972 / ATCC 24843)</name>
    <name type="common">Fission yeast</name>
    <dbReference type="NCBI Taxonomy" id="284812"/>
    <lineage>
        <taxon>Eukaryota</taxon>
        <taxon>Fungi</taxon>
        <taxon>Dikarya</taxon>
        <taxon>Ascomycota</taxon>
        <taxon>Taphrinomycotina</taxon>
        <taxon>Schizosaccharomycetes</taxon>
        <taxon>Schizosaccharomycetales</taxon>
        <taxon>Schizosaccharomycetaceae</taxon>
        <taxon>Schizosaccharomyces</taxon>
    </lineage>
</organism>
<comment type="function">
    <text evidence="1 3">N-acetyltransferase involved in oxidative stress resistance. Acetylates the toxic proline metabolism intermediate (S)-1-pyrroline-5-carboxylate (P5C), or more likely its spontaneously forming tautomer glutamate-5-semialdehyde (GSA) into N-acetyl-GSA for arginine synthesis in the mitochondria. P5C has been shown to increase the levels of reactive oxygen species (ROS) in the cell by inhibiting the function of the respiratory chain in the mitochondria. The enzyme is able to reduce intracellular ROS levels under P5C-induced oxidative stress and protects cells from damage by oxidative stress (By similarity). Also acetylates and thereby detoxifies the proline analog azetidine-2-carboxylate (AZC), however it is unlikely that AZC is a natural substrate as it occurs only in plants belonging to the Lilaceae family (PubMed:12761200).</text>
</comment>
<comment type="catalytic activity">
    <reaction evidence="1">
        <text>L-glutamate 5-semialdehyde + acetyl-CoA = N-acetyl-L-glutamate 5-semialdehyde + CoA + H(+)</text>
        <dbReference type="Rhea" id="RHEA:48232"/>
        <dbReference type="ChEBI" id="CHEBI:15378"/>
        <dbReference type="ChEBI" id="CHEBI:29123"/>
        <dbReference type="ChEBI" id="CHEBI:57287"/>
        <dbReference type="ChEBI" id="CHEBI:57288"/>
        <dbReference type="ChEBI" id="CHEBI:58066"/>
        <dbReference type="EC" id="2.3.1.271"/>
    </reaction>
</comment>
<comment type="biophysicochemical properties">
    <phDependence>
        <text evidence="3">Optimum pH is 8.5-9 for azetidine-2-carboxylate.</text>
    </phDependence>
    <temperatureDependence>
        <text evidence="3">Optimum temperature is 20 degrees Celsius.</text>
    </temperatureDependence>
</comment>
<comment type="subunit">
    <text evidence="3">Homodimer.</text>
</comment>
<comment type="subcellular location">
    <subcellularLocation>
        <location evidence="4">Cytoplasm</location>
    </subcellularLocation>
    <subcellularLocation>
        <location evidence="1">Mitochondrion</location>
    </subcellularLocation>
</comment>
<comment type="similarity">
    <text evidence="6">Belongs to the acetyltransferase family.</text>
</comment>
<name>ACA1_SCHPO</name>
<keyword id="KW-0012">Acyltransferase</keyword>
<keyword id="KW-0963">Cytoplasm</keyword>
<keyword id="KW-0496">Mitochondrion</keyword>
<keyword id="KW-1185">Reference proteome</keyword>
<keyword id="KW-0808">Transferase</keyword>
<reference key="1">
    <citation type="journal article" date="2003" name="J. Biochem.">
        <title>Characterization of novel acetyltransferases found in budding and fission yeasts that detoxify a proline analogue, azetidine-2-carboxylic acid.</title>
        <authorList>
            <person name="Nomura M."/>
            <person name="Nakamori S."/>
            <person name="Takagi H."/>
        </authorList>
    </citation>
    <scope>NUCLEOTIDE SEQUENCE [GENOMIC DNA]</scope>
    <scope>FUNCTION</scope>
    <scope>SUBUNIT</scope>
    <scope>BIOPHYSICOCHEMICAL PROPERTIES</scope>
</reference>
<reference key="2">
    <citation type="journal article" date="2002" name="Nature">
        <title>The genome sequence of Schizosaccharomyces pombe.</title>
        <authorList>
            <person name="Wood V."/>
            <person name="Gwilliam R."/>
            <person name="Rajandream M.A."/>
            <person name="Lyne M.H."/>
            <person name="Lyne R."/>
            <person name="Stewart A."/>
            <person name="Sgouros J.G."/>
            <person name="Peat N."/>
            <person name="Hayles J."/>
            <person name="Baker S.G."/>
            <person name="Basham D."/>
            <person name="Bowman S."/>
            <person name="Brooks K."/>
            <person name="Brown D."/>
            <person name="Brown S."/>
            <person name="Chillingworth T."/>
            <person name="Churcher C.M."/>
            <person name="Collins M."/>
            <person name="Connor R."/>
            <person name="Cronin A."/>
            <person name="Davis P."/>
            <person name="Feltwell T."/>
            <person name="Fraser A."/>
            <person name="Gentles S."/>
            <person name="Goble A."/>
            <person name="Hamlin N."/>
            <person name="Harris D.E."/>
            <person name="Hidalgo J."/>
            <person name="Hodgson G."/>
            <person name="Holroyd S."/>
            <person name="Hornsby T."/>
            <person name="Howarth S."/>
            <person name="Huckle E.J."/>
            <person name="Hunt S."/>
            <person name="Jagels K."/>
            <person name="James K.D."/>
            <person name="Jones L."/>
            <person name="Jones M."/>
            <person name="Leather S."/>
            <person name="McDonald S."/>
            <person name="McLean J."/>
            <person name="Mooney P."/>
            <person name="Moule S."/>
            <person name="Mungall K.L."/>
            <person name="Murphy L.D."/>
            <person name="Niblett D."/>
            <person name="Odell C."/>
            <person name="Oliver K."/>
            <person name="O'Neil S."/>
            <person name="Pearson D."/>
            <person name="Quail M.A."/>
            <person name="Rabbinowitsch E."/>
            <person name="Rutherford K.M."/>
            <person name="Rutter S."/>
            <person name="Saunders D."/>
            <person name="Seeger K."/>
            <person name="Sharp S."/>
            <person name="Skelton J."/>
            <person name="Simmonds M.N."/>
            <person name="Squares R."/>
            <person name="Squares S."/>
            <person name="Stevens K."/>
            <person name="Taylor K."/>
            <person name="Taylor R.G."/>
            <person name="Tivey A."/>
            <person name="Walsh S.V."/>
            <person name="Warren T."/>
            <person name="Whitehead S."/>
            <person name="Woodward J.R."/>
            <person name="Volckaert G."/>
            <person name="Aert R."/>
            <person name="Robben J."/>
            <person name="Grymonprez B."/>
            <person name="Weltjens I."/>
            <person name="Vanstreels E."/>
            <person name="Rieger M."/>
            <person name="Schaefer M."/>
            <person name="Mueller-Auer S."/>
            <person name="Gabel C."/>
            <person name="Fuchs M."/>
            <person name="Duesterhoeft A."/>
            <person name="Fritzc C."/>
            <person name="Holzer E."/>
            <person name="Moestl D."/>
            <person name="Hilbert H."/>
            <person name="Borzym K."/>
            <person name="Langer I."/>
            <person name="Beck A."/>
            <person name="Lehrach H."/>
            <person name="Reinhardt R."/>
            <person name="Pohl T.M."/>
            <person name="Eger P."/>
            <person name="Zimmermann W."/>
            <person name="Wedler H."/>
            <person name="Wambutt R."/>
            <person name="Purnelle B."/>
            <person name="Goffeau A."/>
            <person name="Cadieu E."/>
            <person name="Dreano S."/>
            <person name="Gloux S."/>
            <person name="Lelaure V."/>
            <person name="Mottier S."/>
            <person name="Galibert F."/>
            <person name="Aves S.J."/>
            <person name="Xiang Z."/>
            <person name="Hunt C."/>
            <person name="Moore K."/>
            <person name="Hurst S.M."/>
            <person name="Lucas M."/>
            <person name="Rochet M."/>
            <person name="Gaillardin C."/>
            <person name="Tallada V.A."/>
            <person name="Garzon A."/>
            <person name="Thode G."/>
            <person name="Daga R.R."/>
            <person name="Cruzado L."/>
            <person name="Jimenez J."/>
            <person name="Sanchez M."/>
            <person name="del Rey F."/>
            <person name="Benito J."/>
            <person name="Dominguez A."/>
            <person name="Revuelta J.L."/>
            <person name="Moreno S."/>
            <person name="Armstrong J."/>
            <person name="Forsburg S.L."/>
            <person name="Cerutti L."/>
            <person name="Lowe T."/>
            <person name="McCombie W.R."/>
            <person name="Paulsen I."/>
            <person name="Potashkin J."/>
            <person name="Shpakovski G.V."/>
            <person name="Ussery D."/>
            <person name="Barrell B.G."/>
            <person name="Nurse P."/>
        </authorList>
    </citation>
    <scope>NUCLEOTIDE SEQUENCE [LARGE SCALE GENOMIC DNA]</scope>
    <source>
        <strain>972 / ATCC 24843</strain>
    </source>
</reference>
<reference key="3">
    <citation type="journal article" date="2006" name="Nat. Biotechnol.">
        <title>ORFeome cloning and global analysis of protein localization in the fission yeast Schizosaccharomyces pombe.</title>
        <authorList>
            <person name="Matsuyama A."/>
            <person name="Arai R."/>
            <person name="Yashiroda Y."/>
            <person name="Shirai A."/>
            <person name="Kamata A."/>
            <person name="Sekido S."/>
            <person name="Kobayashi Y."/>
            <person name="Hashimoto A."/>
            <person name="Hamamoto M."/>
            <person name="Hiraoka Y."/>
            <person name="Horinouchi S."/>
            <person name="Yoshida M."/>
        </authorList>
    </citation>
    <scope>SUBCELLULAR LOCATION [LARGE SCALE ANALYSIS]</scope>
</reference>
<gene>
    <name evidence="7" type="primary">aca1</name>
    <name evidence="5" type="synonym">ppr1</name>
    <name type="ORF">SPAC21E11.04</name>
</gene>
<protein>
    <recommendedName>
        <fullName>N-acetyltransferase aca1</fullName>
        <ecNumber evidence="1">2.3.1.271</ecNumber>
    </recommendedName>
    <alternativeName>
        <fullName>(S)-1-pyrroline-5-carboxylate acetyltransferase</fullName>
    </alternativeName>
    <alternativeName>
        <fullName>L-azetidine-2-carboxylate acetyltransferase</fullName>
        <shortName>AZC acetyltransferase</shortName>
    </alternativeName>
</protein>
<proteinExistence type="evidence at protein level"/>
<dbReference type="EC" id="2.3.1.271" evidence="1"/>
<dbReference type="EMBL" id="AB083128">
    <property type="protein sequence ID" value="BAB88769.1"/>
    <property type="molecule type" value="Genomic_DNA"/>
</dbReference>
<dbReference type="EMBL" id="CU329670">
    <property type="protein sequence ID" value="CAA91963.1"/>
    <property type="molecule type" value="Genomic_DNA"/>
</dbReference>
<dbReference type="PIR" id="S62589">
    <property type="entry name" value="S62589"/>
</dbReference>
<dbReference type="RefSeq" id="NP_594501.1">
    <property type="nucleotide sequence ID" value="NM_001019930.2"/>
</dbReference>
<dbReference type="SMR" id="Q09927"/>
<dbReference type="BioGRID" id="278449">
    <property type="interactions" value="31"/>
</dbReference>
<dbReference type="STRING" id="284812.Q09927"/>
<dbReference type="PaxDb" id="4896-SPAC21E11.04.1"/>
<dbReference type="EnsemblFungi" id="SPAC21E11.04.1">
    <property type="protein sequence ID" value="SPAC21E11.04.1:pep"/>
    <property type="gene ID" value="SPAC21E11.04"/>
</dbReference>
<dbReference type="GeneID" id="2541963"/>
<dbReference type="KEGG" id="spo:2541963"/>
<dbReference type="PomBase" id="SPAC21E11.04">
    <property type="gene designation" value="aca1"/>
</dbReference>
<dbReference type="VEuPathDB" id="FungiDB:SPAC21E11.04"/>
<dbReference type="eggNOG" id="ENOG502QRFX">
    <property type="taxonomic scope" value="Eukaryota"/>
</dbReference>
<dbReference type="HOGENOM" id="CLU_013985_42_1_1"/>
<dbReference type="InParanoid" id="Q09927"/>
<dbReference type="OMA" id="MEQPMAL"/>
<dbReference type="PhylomeDB" id="Q09927"/>
<dbReference type="PRO" id="PR:Q09927"/>
<dbReference type="Proteomes" id="UP000002485">
    <property type="component" value="Chromosome I"/>
</dbReference>
<dbReference type="GO" id="GO:0005829">
    <property type="term" value="C:cytosol"/>
    <property type="evidence" value="ECO:0007005"/>
    <property type="project" value="PomBase"/>
</dbReference>
<dbReference type="GO" id="GO:0005739">
    <property type="term" value="C:mitochondrion"/>
    <property type="evidence" value="ECO:0007669"/>
    <property type="project" value="UniProtKB-SubCell"/>
</dbReference>
<dbReference type="GO" id="GO:0005634">
    <property type="term" value="C:nucleus"/>
    <property type="evidence" value="ECO:0007005"/>
    <property type="project" value="PomBase"/>
</dbReference>
<dbReference type="GO" id="GO:0046941">
    <property type="term" value="F:azetidine-2-carboxylic acid acetyltransferase activity"/>
    <property type="evidence" value="ECO:0000314"/>
    <property type="project" value="PomBase"/>
</dbReference>
<dbReference type="FunFam" id="3.40.630.30:FF:000347">
    <property type="entry name" value="N-acetyltransferase aca1"/>
    <property type="match status" value="1"/>
</dbReference>
<dbReference type="Gene3D" id="3.40.630.30">
    <property type="match status" value="1"/>
</dbReference>
<dbReference type="InterPro" id="IPR016181">
    <property type="entry name" value="Acyl_CoA_acyltransferase"/>
</dbReference>
<dbReference type="InterPro" id="IPR000182">
    <property type="entry name" value="GNAT_dom"/>
</dbReference>
<dbReference type="InterPro" id="IPR052742">
    <property type="entry name" value="Mito_N-acetyltransferase"/>
</dbReference>
<dbReference type="PANTHER" id="PTHR43138">
    <property type="entry name" value="ACETYLTRANSFERASE, GNAT FAMILY"/>
    <property type="match status" value="1"/>
</dbReference>
<dbReference type="PANTHER" id="PTHR43138:SF1">
    <property type="entry name" value="N-ACETYLTRANSFERASE ACA1"/>
    <property type="match status" value="1"/>
</dbReference>
<dbReference type="Pfam" id="PF00583">
    <property type="entry name" value="Acetyltransf_1"/>
    <property type="match status" value="1"/>
</dbReference>
<dbReference type="SUPFAM" id="SSF55729">
    <property type="entry name" value="Acyl-CoA N-acyltransferases (Nat)"/>
    <property type="match status" value="1"/>
</dbReference>
<dbReference type="PROSITE" id="PS51186">
    <property type="entry name" value="GNAT"/>
    <property type="match status" value="1"/>
</dbReference>